<proteinExistence type="inferred from homology"/>
<accession>P43801</accession>
<name>GLPC_HAEIN</name>
<sequence length="426" mass="48069">MDNNIQRLIDSAKQSLNSPESYKYIDESFESCIKCTACTAVCPVSRNNPLYPGPKQSGPDGERLRLKSAELYDEALKYCTNCKRCEVACPSDVKIGDLIVRARNNHLAQSKKPLMNKLRDAILSNTDVMGKINTPLAPIVNTITGLKATKFMLEKTLNISKKRTLPKYAFGTFRSWYMKNALQDQQKFERKVAYFHGCYVNYNNPQLGKEFLKVFNAMNIGVMLLEKEKCCGLPLMVNGFPNRARNIAQFNTDYIGKMVDENGIDVISEASSCSLNLRDEYHHILGIDNAKVRPHIHMVTPFLYQLFKEGKTLPLKPLKLRVAYHTACHVDKAGWAPYTLEVLKKIPSLEIIMLPSQCCGIAGTYGFKSENYEISQSIGKNLFDNINEGGFDYVISECQTCKWQIDMSSNVTCIHPLTLLCMSMDA</sequence>
<comment type="function">
    <text evidence="1">Electron transfer protein; may also function as the membrane anchor for the GlpAB dimer.</text>
</comment>
<comment type="pathway">
    <text>Polyol metabolism; glycerol degradation via glycerol kinase pathway; glycerone phosphate from sn-glycerol 3-phosphate (anaerobic route): step 1/1.</text>
</comment>
<comment type="subunit">
    <text evidence="1">Composed of a catalytic GlpA/B dimer and of GlpC.</text>
</comment>
<comment type="subcellular location">
    <subcellularLocation>
        <location evidence="1">Cell inner membrane</location>
        <topology evidence="1">Peripheral membrane protein</topology>
    </subcellularLocation>
    <text evidence="1">Loosely bound to the cytoplasmic membrane often occurring in vesicles associated with fumarate reductase.</text>
</comment>
<organism>
    <name type="scientific">Haemophilus influenzae (strain ATCC 51907 / DSM 11121 / KW20 / Rd)</name>
    <dbReference type="NCBI Taxonomy" id="71421"/>
    <lineage>
        <taxon>Bacteria</taxon>
        <taxon>Pseudomonadati</taxon>
        <taxon>Pseudomonadota</taxon>
        <taxon>Gammaproteobacteria</taxon>
        <taxon>Pasteurellales</taxon>
        <taxon>Pasteurellaceae</taxon>
        <taxon>Haemophilus</taxon>
    </lineage>
</organism>
<dbReference type="EMBL" id="L42023">
    <property type="protein sequence ID" value="AAC22343.1"/>
    <property type="molecule type" value="Genomic_DNA"/>
</dbReference>
<dbReference type="PIR" id="C64086">
    <property type="entry name" value="C64086"/>
</dbReference>
<dbReference type="RefSeq" id="NP_438843.1">
    <property type="nucleotide sequence ID" value="NC_000907.1"/>
</dbReference>
<dbReference type="STRING" id="71421.HI_0683"/>
<dbReference type="EnsemblBacteria" id="AAC22343">
    <property type="protein sequence ID" value="AAC22343"/>
    <property type="gene ID" value="HI_0683"/>
</dbReference>
<dbReference type="KEGG" id="hin:HI_0683"/>
<dbReference type="PATRIC" id="fig|71421.8.peg.714"/>
<dbReference type="eggNOG" id="COG0247">
    <property type="taxonomic scope" value="Bacteria"/>
</dbReference>
<dbReference type="HOGENOM" id="CLU_023081_7_1_6"/>
<dbReference type="OrthoDB" id="9765258at2"/>
<dbReference type="PhylomeDB" id="P43801"/>
<dbReference type="BioCyc" id="HINF71421:G1GJ1-718-MONOMER"/>
<dbReference type="UniPathway" id="UPA00618">
    <property type="reaction ID" value="UER00673"/>
</dbReference>
<dbReference type="Proteomes" id="UP000000579">
    <property type="component" value="Chromosome"/>
</dbReference>
<dbReference type="GO" id="GO:0009331">
    <property type="term" value="C:glycerol-3-phosphate dehydrogenase (FAD) complex"/>
    <property type="evidence" value="ECO:0007669"/>
    <property type="project" value="InterPro"/>
</dbReference>
<dbReference type="GO" id="GO:0005886">
    <property type="term" value="C:plasma membrane"/>
    <property type="evidence" value="ECO:0000318"/>
    <property type="project" value="GO_Central"/>
</dbReference>
<dbReference type="GO" id="GO:0051539">
    <property type="term" value="F:4 iron, 4 sulfur cluster binding"/>
    <property type="evidence" value="ECO:0007669"/>
    <property type="project" value="UniProtKB-KW"/>
</dbReference>
<dbReference type="GO" id="GO:0004368">
    <property type="term" value="F:glycerol-3-phosphate dehydrogenase (quinone) activity"/>
    <property type="evidence" value="ECO:0000318"/>
    <property type="project" value="GO_Central"/>
</dbReference>
<dbReference type="GO" id="GO:0046872">
    <property type="term" value="F:metal ion binding"/>
    <property type="evidence" value="ECO:0007669"/>
    <property type="project" value="UniProtKB-KW"/>
</dbReference>
<dbReference type="GO" id="GO:0009061">
    <property type="term" value="P:anaerobic respiration"/>
    <property type="evidence" value="ECO:0000318"/>
    <property type="project" value="GO_Central"/>
</dbReference>
<dbReference type="GO" id="GO:0022900">
    <property type="term" value="P:electron transport chain"/>
    <property type="evidence" value="ECO:0000318"/>
    <property type="project" value="GO_Central"/>
</dbReference>
<dbReference type="GO" id="GO:0019563">
    <property type="term" value="P:glycerol catabolic process"/>
    <property type="evidence" value="ECO:0007669"/>
    <property type="project" value="UniProtKB-UniPathway"/>
</dbReference>
<dbReference type="Gene3D" id="1.10.1060.10">
    <property type="entry name" value="Alpha-helical ferredoxin"/>
    <property type="match status" value="1"/>
</dbReference>
<dbReference type="InterPro" id="IPR017896">
    <property type="entry name" value="4Fe4S_Fe-S-bd"/>
</dbReference>
<dbReference type="InterPro" id="IPR017900">
    <property type="entry name" value="4Fe4S_Fe_S_CS"/>
</dbReference>
<dbReference type="InterPro" id="IPR004017">
    <property type="entry name" value="Cys_rich_dom"/>
</dbReference>
<dbReference type="InterPro" id="IPR017753">
    <property type="entry name" value="G3P_DH_GlpC_su"/>
</dbReference>
<dbReference type="InterPro" id="IPR009051">
    <property type="entry name" value="Helical_ferredxn"/>
</dbReference>
<dbReference type="NCBIfam" id="TIGR03379">
    <property type="entry name" value="glycerol3P_GlpC"/>
    <property type="match status" value="1"/>
</dbReference>
<dbReference type="NCBIfam" id="NF008369">
    <property type="entry name" value="PRK11168.1"/>
    <property type="match status" value="1"/>
</dbReference>
<dbReference type="PANTHER" id="PTHR32479:SF19">
    <property type="entry name" value="ANAEROBIC GLYCEROL-3-PHOSPHATE DEHYDROGENASE SUBUNIT C"/>
    <property type="match status" value="1"/>
</dbReference>
<dbReference type="PANTHER" id="PTHR32479">
    <property type="entry name" value="GLYCOLATE OXIDASE IRON-SULFUR SUBUNIT"/>
    <property type="match status" value="1"/>
</dbReference>
<dbReference type="Pfam" id="PF02754">
    <property type="entry name" value="CCG"/>
    <property type="match status" value="2"/>
</dbReference>
<dbReference type="Pfam" id="PF13183">
    <property type="entry name" value="Fer4_8"/>
    <property type="match status" value="1"/>
</dbReference>
<dbReference type="SUPFAM" id="SSF46548">
    <property type="entry name" value="alpha-helical ferredoxin"/>
    <property type="match status" value="1"/>
</dbReference>
<dbReference type="PROSITE" id="PS00198">
    <property type="entry name" value="4FE4S_FER_1"/>
    <property type="match status" value="2"/>
</dbReference>
<dbReference type="PROSITE" id="PS51379">
    <property type="entry name" value="4FE4S_FER_2"/>
    <property type="match status" value="2"/>
</dbReference>
<gene>
    <name type="primary">glpC</name>
    <name type="ordered locus">HI_0683</name>
</gene>
<protein>
    <recommendedName>
        <fullName>Anaerobic glycerol-3-phosphate dehydrogenase subunit C</fullName>
        <shortName>G-3-P dehydrogenase</shortName>
    </recommendedName>
</protein>
<evidence type="ECO:0000250" key="1"/>
<evidence type="ECO:0000255" key="2">
    <source>
        <dbReference type="PROSITE-ProRule" id="PRU00711"/>
    </source>
</evidence>
<feature type="chain" id="PRO_0000159261" description="Anaerobic glycerol-3-phosphate dehydrogenase subunit C">
    <location>
        <begin position="1"/>
        <end position="426"/>
    </location>
</feature>
<feature type="domain" description="4Fe-4S ferredoxin-type 1" evidence="2">
    <location>
        <begin position="21"/>
        <end position="53"/>
    </location>
</feature>
<feature type="domain" description="4Fe-4S ferredoxin-type 2" evidence="2">
    <location>
        <begin position="67"/>
        <end position="99"/>
    </location>
</feature>
<feature type="binding site" evidence="1">
    <location>
        <position position="32"/>
    </location>
    <ligand>
        <name>[4Fe-4S] cluster</name>
        <dbReference type="ChEBI" id="CHEBI:49883"/>
        <label>1</label>
    </ligand>
</feature>
<feature type="binding site" evidence="1">
    <location>
        <position position="35"/>
    </location>
    <ligand>
        <name>[4Fe-4S] cluster</name>
        <dbReference type="ChEBI" id="CHEBI:49883"/>
        <label>1</label>
    </ligand>
</feature>
<feature type="binding site" evidence="1">
    <location>
        <position position="38"/>
    </location>
    <ligand>
        <name>[4Fe-4S] cluster</name>
        <dbReference type="ChEBI" id="CHEBI:49883"/>
        <label>1</label>
    </ligand>
</feature>
<feature type="binding site" evidence="1">
    <location>
        <position position="42"/>
    </location>
    <ligand>
        <name>[4Fe-4S] cluster</name>
        <dbReference type="ChEBI" id="CHEBI:49883"/>
        <label>2</label>
    </ligand>
</feature>
<feature type="binding site" evidence="1">
    <location>
        <position position="79"/>
    </location>
    <ligand>
        <name>[4Fe-4S] cluster</name>
        <dbReference type="ChEBI" id="CHEBI:49883"/>
        <label>2</label>
    </ligand>
</feature>
<feature type="binding site" evidence="1">
    <location>
        <position position="82"/>
    </location>
    <ligand>
        <name>[4Fe-4S] cluster</name>
        <dbReference type="ChEBI" id="CHEBI:49883"/>
        <label>2</label>
    </ligand>
</feature>
<feature type="binding site" evidence="1">
    <location>
        <position position="85"/>
    </location>
    <ligand>
        <name>[4Fe-4S] cluster</name>
        <dbReference type="ChEBI" id="CHEBI:49883"/>
        <label>2</label>
    </ligand>
</feature>
<feature type="binding site" evidence="1">
    <location>
        <position position="89"/>
    </location>
    <ligand>
        <name>[4Fe-4S] cluster</name>
        <dbReference type="ChEBI" id="CHEBI:49883"/>
        <label>1</label>
    </ligand>
</feature>
<keyword id="KW-0004">4Fe-4S</keyword>
<keyword id="KW-0997">Cell inner membrane</keyword>
<keyword id="KW-1003">Cell membrane</keyword>
<keyword id="KW-0249">Electron transport</keyword>
<keyword id="KW-0408">Iron</keyword>
<keyword id="KW-0411">Iron-sulfur</keyword>
<keyword id="KW-0472">Membrane</keyword>
<keyword id="KW-0479">Metal-binding</keyword>
<keyword id="KW-1185">Reference proteome</keyword>
<keyword id="KW-0677">Repeat</keyword>
<keyword id="KW-0813">Transport</keyword>
<reference key="1">
    <citation type="journal article" date="1995" name="Science">
        <title>Whole-genome random sequencing and assembly of Haemophilus influenzae Rd.</title>
        <authorList>
            <person name="Fleischmann R.D."/>
            <person name="Adams M.D."/>
            <person name="White O."/>
            <person name="Clayton R.A."/>
            <person name="Kirkness E.F."/>
            <person name="Kerlavage A.R."/>
            <person name="Bult C.J."/>
            <person name="Tomb J.-F."/>
            <person name="Dougherty B.A."/>
            <person name="Merrick J.M."/>
            <person name="McKenney K."/>
            <person name="Sutton G.G."/>
            <person name="FitzHugh W."/>
            <person name="Fields C.A."/>
            <person name="Gocayne J.D."/>
            <person name="Scott J.D."/>
            <person name="Shirley R."/>
            <person name="Liu L.-I."/>
            <person name="Glodek A."/>
            <person name="Kelley J.M."/>
            <person name="Weidman J.F."/>
            <person name="Phillips C.A."/>
            <person name="Spriggs T."/>
            <person name="Hedblom E."/>
            <person name="Cotton M.D."/>
            <person name="Utterback T.R."/>
            <person name="Hanna M.C."/>
            <person name="Nguyen D.T."/>
            <person name="Saudek D.M."/>
            <person name="Brandon R.C."/>
            <person name="Fine L.D."/>
            <person name="Fritchman J.L."/>
            <person name="Fuhrmann J.L."/>
            <person name="Geoghagen N.S.M."/>
            <person name="Gnehm C.L."/>
            <person name="McDonald L.A."/>
            <person name="Small K.V."/>
            <person name="Fraser C.M."/>
            <person name="Smith H.O."/>
            <person name="Venter J.C."/>
        </authorList>
    </citation>
    <scope>NUCLEOTIDE SEQUENCE [LARGE SCALE GENOMIC DNA]</scope>
    <source>
        <strain>ATCC 51907 / DSM 11121 / KW20 / Rd</strain>
    </source>
</reference>